<gene>
    <name evidence="1" type="primary">speA</name>
    <name type="ordered locus">Geob_1678</name>
</gene>
<evidence type="ECO:0000255" key="1">
    <source>
        <dbReference type="HAMAP-Rule" id="MF_01417"/>
    </source>
</evidence>
<comment type="function">
    <text evidence="1">Catalyzes the biosynthesis of agmatine from arginine.</text>
</comment>
<comment type="catalytic activity">
    <reaction evidence="1">
        <text>L-arginine + H(+) = agmatine + CO2</text>
        <dbReference type="Rhea" id="RHEA:17641"/>
        <dbReference type="ChEBI" id="CHEBI:15378"/>
        <dbReference type="ChEBI" id="CHEBI:16526"/>
        <dbReference type="ChEBI" id="CHEBI:32682"/>
        <dbReference type="ChEBI" id="CHEBI:58145"/>
        <dbReference type="EC" id="4.1.1.19"/>
    </reaction>
</comment>
<comment type="cofactor">
    <cofactor evidence="1">
        <name>Mg(2+)</name>
        <dbReference type="ChEBI" id="CHEBI:18420"/>
    </cofactor>
</comment>
<comment type="cofactor">
    <cofactor evidence="1">
        <name>pyridoxal 5'-phosphate</name>
        <dbReference type="ChEBI" id="CHEBI:597326"/>
    </cofactor>
</comment>
<comment type="pathway">
    <text evidence="1">Amine and polyamine biosynthesis; agmatine biosynthesis; agmatine from L-arginine: step 1/1.</text>
</comment>
<comment type="similarity">
    <text evidence="1">Belongs to the Orn/Lys/Arg decarboxylase class-II family. SpeA subfamily.</text>
</comment>
<accession>B9M6H6</accession>
<dbReference type="EC" id="4.1.1.19" evidence="1"/>
<dbReference type="EMBL" id="CP001390">
    <property type="protein sequence ID" value="ACM20036.1"/>
    <property type="molecule type" value="Genomic_DNA"/>
</dbReference>
<dbReference type="RefSeq" id="WP_012646765.1">
    <property type="nucleotide sequence ID" value="NC_011979.1"/>
</dbReference>
<dbReference type="SMR" id="B9M6H6"/>
<dbReference type="STRING" id="316067.Geob_1678"/>
<dbReference type="KEGG" id="geo:Geob_1678"/>
<dbReference type="eggNOG" id="COG1166">
    <property type="taxonomic scope" value="Bacteria"/>
</dbReference>
<dbReference type="HOGENOM" id="CLU_027243_1_0_7"/>
<dbReference type="OrthoDB" id="9802658at2"/>
<dbReference type="UniPathway" id="UPA00186">
    <property type="reaction ID" value="UER00284"/>
</dbReference>
<dbReference type="Proteomes" id="UP000007721">
    <property type="component" value="Chromosome"/>
</dbReference>
<dbReference type="GO" id="GO:0008792">
    <property type="term" value="F:arginine decarboxylase activity"/>
    <property type="evidence" value="ECO:0007669"/>
    <property type="project" value="UniProtKB-UniRule"/>
</dbReference>
<dbReference type="GO" id="GO:0046872">
    <property type="term" value="F:metal ion binding"/>
    <property type="evidence" value="ECO:0007669"/>
    <property type="project" value="UniProtKB-KW"/>
</dbReference>
<dbReference type="GO" id="GO:0006527">
    <property type="term" value="P:arginine catabolic process"/>
    <property type="evidence" value="ECO:0007669"/>
    <property type="project" value="InterPro"/>
</dbReference>
<dbReference type="GO" id="GO:0033388">
    <property type="term" value="P:putrescine biosynthetic process from arginine"/>
    <property type="evidence" value="ECO:0007669"/>
    <property type="project" value="TreeGrafter"/>
</dbReference>
<dbReference type="GO" id="GO:0008295">
    <property type="term" value="P:spermidine biosynthetic process"/>
    <property type="evidence" value="ECO:0007669"/>
    <property type="project" value="UniProtKB-UniRule"/>
</dbReference>
<dbReference type="CDD" id="cd06830">
    <property type="entry name" value="PLPDE_III_ADC"/>
    <property type="match status" value="1"/>
</dbReference>
<dbReference type="FunFam" id="1.20.58.930:FF:000002">
    <property type="entry name" value="Biosynthetic arginine decarboxylase"/>
    <property type="match status" value="1"/>
</dbReference>
<dbReference type="Gene3D" id="1.10.287.3440">
    <property type="match status" value="1"/>
</dbReference>
<dbReference type="Gene3D" id="1.20.58.930">
    <property type="match status" value="1"/>
</dbReference>
<dbReference type="Gene3D" id="3.20.20.10">
    <property type="entry name" value="Alanine racemase"/>
    <property type="match status" value="1"/>
</dbReference>
<dbReference type="Gene3D" id="2.40.37.10">
    <property type="entry name" value="Lyase, Ornithine Decarboxylase, Chain A, domain 1"/>
    <property type="match status" value="1"/>
</dbReference>
<dbReference type="HAMAP" id="MF_01417">
    <property type="entry name" value="SpeA"/>
    <property type="match status" value="1"/>
</dbReference>
<dbReference type="InterPro" id="IPR009006">
    <property type="entry name" value="Ala_racemase/Decarboxylase_C"/>
</dbReference>
<dbReference type="InterPro" id="IPR040634">
    <property type="entry name" value="Arg_decarb_HB"/>
</dbReference>
<dbReference type="InterPro" id="IPR041128">
    <property type="entry name" value="Arg_decarbox_C"/>
</dbReference>
<dbReference type="InterPro" id="IPR002985">
    <property type="entry name" value="Arg_decrbxlase"/>
</dbReference>
<dbReference type="InterPro" id="IPR022657">
    <property type="entry name" value="De-COase2_CS"/>
</dbReference>
<dbReference type="InterPro" id="IPR022644">
    <property type="entry name" value="De-COase2_N"/>
</dbReference>
<dbReference type="InterPro" id="IPR022653">
    <property type="entry name" value="De-COase2_pyr-phos_BS"/>
</dbReference>
<dbReference type="InterPro" id="IPR000183">
    <property type="entry name" value="Orn/DAP/Arg_de-COase"/>
</dbReference>
<dbReference type="InterPro" id="IPR029066">
    <property type="entry name" value="PLP-binding_barrel"/>
</dbReference>
<dbReference type="NCBIfam" id="NF003763">
    <property type="entry name" value="PRK05354.1"/>
    <property type="match status" value="1"/>
</dbReference>
<dbReference type="NCBIfam" id="TIGR01273">
    <property type="entry name" value="speA"/>
    <property type="match status" value="1"/>
</dbReference>
<dbReference type="PANTHER" id="PTHR43295">
    <property type="entry name" value="ARGININE DECARBOXYLASE"/>
    <property type="match status" value="1"/>
</dbReference>
<dbReference type="PANTHER" id="PTHR43295:SF9">
    <property type="entry name" value="BIOSYNTHETIC ARGININE DECARBOXYLASE"/>
    <property type="match status" value="1"/>
</dbReference>
<dbReference type="Pfam" id="PF17810">
    <property type="entry name" value="Arg_decarb_HB"/>
    <property type="match status" value="1"/>
</dbReference>
<dbReference type="Pfam" id="PF17944">
    <property type="entry name" value="Arg_decarbox_C"/>
    <property type="match status" value="1"/>
</dbReference>
<dbReference type="Pfam" id="PF02784">
    <property type="entry name" value="Orn_Arg_deC_N"/>
    <property type="match status" value="1"/>
</dbReference>
<dbReference type="PIRSF" id="PIRSF001336">
    <property type="entry name" value="Arg_decrbxlase"/>
    <property type="match status" value="1"/>
</dbReference>
<dbReference type="PRINTS" id="PR01180">
    <property type="entry name" value="ARGDCRBXLASE"/>
</dbReference>
<dbReference type="PRINTS" id="PR01179">
    <property type="entry name" value="ODADCRBXLASE"/>
</dbReference>
<dbReference type="SUPFAM" id="SSF50621">
    <property type="entry name" value="Alanine racemase C-terminal domain-like"/>
    <property type="match status" value="1"/>
</dbReference>
<dbReference type="SUPFAM" id="SSF51419">
    <property type="entry name" value="PLP-binding barrel"/>
    <property type="match status" value="1"/>
</dbReference>
<dbReference type="PROSITE" id="PS00878">
    <property type="entry name" value="ODR_DC_2_1"/>
    <property type="match status" value="1"/>
</dbReference>
<dbReference type="PROSITE" id="PS00879">
    <property type="entry name" value="ODR_DC_2_2"/>
    <property type="match status" value="1"/>
</dbReference>
<feature type="chain" id="PRO_1000184844" description="Biosynthetic arginine decarboxylase">
    <location>
        <begin position="1"/>
        <end position="635"/>
    </location>
</feature>
<feature type="binding site" evidence="1">
    <location>
        <begin position="282"/>
        <end position="292"/>
    </location>
    <ligand>
        <name>substrate</name>
    </ligand>
</feature>
<feature type="modified residue" description="N6-(pyridoxal phosphate)lysine" evidence="1">
    <location>
        <position position="100"/>
    </location>
</feature>
<proteinExistence type="inferred from homology"/>
<reference key="1">
    <citation type="submission" date="2009-01" db="EMBL/GenBank/DDBJ databases">
        <title>Complete sequence of Geobacter sp. FRC-32.</title>
        <authorList>
            <consortium name="US DOE Joint Genome Institute"/>
            <person name="Lucas S."/>
            <person name="Copeland A."/>
            <person name="Lapidus A."/>
            <person name="Glavina del Rio T."/>
            <person name="Dalin E."/>
            <person name="Tice H."/>
            <person name="Bruce D."/>
            <person name="Goodwin L."/>
            <person name="Pitluck S."/>
            <person name="Saunders E."/>
            <person name="Brettin T."/>
            <person name="Detter J.C."/>
            <person name="Han C."/>
            <person name="Larimer F."/>
            <person name="Land M."/>
            <person name="Hauser L."/>
            <person name="Kyrpides N."/>
            <person name="Ovchinnikova G."/>
            <person name="Kostka J."/>
            <person name="Richardson P."/>
        </authorList>
    </citation>
    <scope>NUCLEOTIDE SEQUENCE [LARGE SCALE GENOMIC DNA]</scope>
    <source>
        <strain>DSM 22248 / JCM 15807 / FRC-32</strain>
    </source>
</reference>
<organism>
    <name type="scientific">Geotalea daltonii (strain DSM 22248 / JCM 15807 / FRC-32)</name>
    <name type="common">Geobacter daltonii</name>
    <dbReference type="NCBI Taxonomy" id="316067"/>
    <lineage>
        <taxon>Bacteria</taxon>
        <taxon>Pseudomonadati</taxon>
        <taxon>Thermodesulfobacteriota</taxon>
        <taxon>Desulfuromonadia</taxon>
        <taxon>Geobacterales</taxon>
        <taxon>Geobacteraceae</taxon>
        <taxon>Geotalea</taxon>
    </lineage>
</organism>
<name>SPEA_GEODF</name>
<sequence>MERWNINDSSKIYNLDNWGADLFSINKKGNVCVHPSPSSKSSIDLRVLVDDLIKRKIKPPILLRFMDVLQGRIASINRAFKSAISENDYPAKYQTFFPIKVNQQRQVVEAIASYGKRYNIGLEVGSKPELVAGISISSGNNLPIICNGYKDSEYIETVLYATAIGYDITLVIEKLFELEKVIELVKKTGIQPRLGIRVKLSSKGTGKWATSGGEDAKFGLRMSEIIAAIDLLEENGLLDRVKLIHFHIGSQITKIDKIKTALIEGARVYTELRKMGMGIEFVDIGGGLGVDYDGSKSSYFSSVNYSVEEYANDVIYQIKNICDDAGVECPNIISESGRATVAHYSVLVTNVLNTNTQRLTPDFEEELAAAEKLAPTVKKLVDIHKSIDRYSLREDYHDTVQLIQEAVSLFNLGYLTLNERAMAEWLYGKIIKKINSIVEKIKPIPEELQNFQLALRQTYFANFSLFQSIPDSWAIDQLFPIVPIQRLNQKPDVIASIADITCDSDGEITSFVGENGRTKFLPLHKIRKDEDYYIGFFLIGAYQEILGDMHNLFGDTNAVHITFNKKTGYMIDTVINGDACWESLKYVQYKGPEILKRVREHLEKGVAQRKVSIEESSHFIELLDRTLLGYTYLGE</sequence>
<protein>
    <recommendedName>
        <fullName evidence="1">Biosynthetic arginine decarboxylase</fullName>
        <shortName evidence="1">ADC</shortName>
        <ecNumber evidence="1">4.1.1.19</ecNumber>
    </recommendedName>
</protein>
<keyword id="KW-0210">Decarboxylase</keyword>
<keyword id="KW-0456">Lyase</keyword>
<keyword id="KW-0460">Magnesium</keyword>
<keyword id="KW-0479">Metal-binding</keyword>
<keyword id="KW-0620">Polyamine biosynthesis</keyword>
<keyword id="KW-0663">Pyridoxal phosphate</keyword>
<keyword id="KW-1185">Reference proteome</keyword>
<keyword id="KW-0745">Spermidine biosynthesis</keyword>